<keyword id="KW-0067">ATP-binding</keyword>
<keyword id="KW-0963">Cytoplasm</keyword>
<keyword id="KW-0418">Kinase</keyword>
<keyword id="KW-0547">Nucleotide-binding</keyword>
<keyword id="KW-0808">Transferase</keyword>
<gene>
    <name evidence="1" type="primary">cmk</name>
    <name type="ordered locus">JTY_1726</name>
</gene>
<name>KCY_MYCBT</name>
<organism>
    <name type="scientific">Mycobacterium bovis (strain BCG / Tokyo 172 / ATCC 35737 / TMC 1019)</name>
    <dbReference type="NCBI Taxonomy" id="561275"/>
    <lineage>
        <taxon>Bacteria</taxon>
        <taxon>Bacillati</taxon>
        <taxon>Actinomycetota</taxon>
        <taxon>Actinomycetes</taxon>
        <taxon>Mycobacteriales</taxon>
        <taxon>Mycobacteriaceae</taxon>
        <taxon>Mycobacterium</taxon>
        <taxon>Mycobacterium tuberculosis complex</taxon>
    </lineage>
</organism>
<protein>
    <recommendedName>
        <fullName evidence="1">Cytidylate kinase</fullName>
        <shortName evidence="1">CK</shortName>
        <ecNumber evidence="1">2.7.4.25</ecNumber>
    </recommendedName>
    <alternativeName>
        <fullName evidence="1">Cytidine monophosphate kinase</fullName>
        <shortName evidence="1">CMP kinase</shortName>
    </alternativeName>
</protein>
<sequence>MSRLSAAVVAIDGPAGTGKSSVSRRLARELGARFLDTGAMYRIVTLAVLRAGADPSDIAAVETIASTVQMSLGYDPDGDSCYLAGEDVSVEIRGDAVTRAVSAVSSVPAVRTRLVELQRTMAEGPGSIVVEGRDIGTVVFPDAPVKIFLTASAETRARRRNAQNVAAGLADDYDGVLADVRRRDHLDSTRAVSPLQAAGDAVIVDTSDMTEAEVVAHLLELVTRRSEAVR</sequence>
<feature type="chain" id="PRO_1000125292" description="Cytidylate kinase">
    <location>
        <begin position="1"/>
        <end position="230"/>
    </location>
</feature>
<feature type="binding site" evidence="1">
    <location>
        <begin position="13"/>
        <end position="21"/>
    </location>
    <ligand>
        <name>ATP</name>
        <dbReference type="ChEBI" id="CHEBI:30616"/>
    </ligand>
</feature>
<proteinExistence type="inferred from homology"/>
<accession>C1ANY5</accession>
<dbReference type="EC" id="2.7.4.25" evidence="1"/>
<dbReference type="EMBL" id="AP010918">
    <property type="protein sequence ID" value="BAH26014.1"/>
    <property type="molecule type" value="Genomic_DNA"/>
</dbReference>
<dbReference type="RefSeq" id="WP_003408441.1">
    <property type="nucleotide sequence ID" value="NZ_CP014566.1"/>
</dbReference>
<dbReference type="SMR" id="C1ANY5"/>
<dbReference type="GeneID" id="45425683"/>
<dbReference type="KEGG" id="mbt:JTY_1726"/>
<dbReference type="HOGENOM" id="CLU_079959_0_0_11"/>
<dbReference type="GO" id="GO:0005829">
    <property type="term" value="C:cytosol"/>
    <property type="evidence" value="ECO:0007669"/>
    <property type="project" value="TreeGrafter"/>
</dbReference>
<dbReference type="GO" id="GO:0005524">
    <property type="term" value="F:ATP binding"/>
    <property type="evidence" value="ECO:0007669"/>
    <property type="project" value="UniProtKB-UniRule"/>
</dbReference>
<dbReference type="GO" id="GO:0036430">
    <property type="term" value="F:CMP kinase activity"/>
    <property type="evidence" value="ECO:0007669"/>
    <property type="project" value="RHEA"/>
</dbReference>
<dbReference type="GO" id="GO:0036431">
    <property type="term" value="F:dCMP kinase activity"/>
    <property type="evidence" value="ECO:0007669"/>
    <property type="project" value="RHEA"/>
</dbReference>
<dbReference type="GO" id="GO:0015949">
    <property type="term" value="P:nucleobase-containing small molecule interconversion"/>
    <property type="evidence" value="ECO:0007669"/>
    <property type="project" value="TreeGrafter"/>
</dbReference>
<dbReference type="GO" id="GO:0006220">
    <property type="term" value="P:pyrimidine nucleotide metabolic process"/>
    <property type="evidence" value="ECO:0007669"/>
    <property type="project" value="UniProtKB-UniRule"/>
</dbReference>
<dbReference type="CDD" id="cd02020">
    <property type="entry name" value="CMPK"/>
    <property type="match status" value="1"/>
</dbReference>
<dbReference type="Gene3D" id="3.40.50.300">
    <property type="entry name" value="P-loop containing nucleotide triphosphate hydrolases"/>
    <property type="match status" value="1"/>
</dbReference>
<dbReference type="HAMAP" id="MF_00238">
    <property type="entry name" value="Cytidyl_kinase_type1"/>
    <property type="match status" value="1"/>
</dbReference>
<dbReference type="InterPro" id="IPR003136">
    <property type="entry name" value="Cytidylate_kin"/>
</dbReference>
<dbReference type="InterPro" id="IPR011994">
    <property type="entry name" value="Cytidylate_kinase_dom"/>
</dbReference>
<dbReference type="InterPro" id="IPR027417">
    <property type="entry name" value="P-loop_NTPase"/>
</dbReference>
<dbReference type="NCBIfam" id="TIGR00017">
    <property type="entry name" value="cmk"/>
    <property type="match status" value="1"/>
</dbReference>
<dbReference type="PANTHER" id="PTHR21299:SF2">
    <property type="entry name" value="CYTIDYLATE KINASE"/>
    <property type="match status" value="1"/>
</dbReference>
<dbReference type="PANTHER" id="PTHR21299">
    <property type="entry name" value="CYTIDYLATE KINASE/PANTOATE-BETA-ALANINE LIGASE"/>
    <property type="match status" value="1"/>
</dbReference>
<dbReference type="Pfam" id="PF02224">
    <property type="entry name" value="Cytidylate_kin"/>
    <property type="match status" value="1"/>
</dbReference>
<dbReference type="SUPFAM" id="SSF52540">
    <property type="entry name" value="P-loop containing nucleoside triphosphate hydrolases"/>
    <property type="match status" value="1"/>
</dbReference>
<evidence type="ECO:0000255" key="1">
    <source>
        <dbReference type="HAMAP-Rule" id="MF_00238"/>
    </source>
</evidence>
<comment type="catalytic activity">
    <reaction evidence="1">
        <text>CMP + ATP = CDP + ADP</text>
        <dbReference type="Rhea" id="RHEA:11600"/>
        <dbReference type="ChEBI" id="CHEBI:30616"/>
        <dbReference type="ChEBI" id="CHEBI:58069"/>
        <dbReference type="ChEBI" id="CHEBI:60377"/>
        <dbReference type="ChEBI" id="CHEBI:456216"/>
        <dbReference type="EC" id="2.7.4.25"/>
    </reaction>
</comment>
<comment type="catalytic activity">
    <reaction evidence="1">
        <text>dCMP + ATP = dCDP + ADP</text>
        <dbReference type="Rhea" id="RHEA:25094"/>
        <dbReference type="ChEBI" id="CHEBI:30616"/>
        <dbReference type="ChEBI" id="CHEBI:57566"/>
        <dbReference type="ChEBI" id="CHEBI:58593"/>
        <dbReference type="ChEBI" id="CHEBI:456216"/>
        <dbReference type="EC" id="2.7.4.25"/>
    </reaction>
</comment>
<comment type="subcellular location">
    <subcellularLocation>
        <location evidence="1">Cytoplasm</location>
    </subcellularLocation>
</comment>
<comment type="similarity">
    <text evidence="1">Belongs to the cytidylate kinase family. Type 1 subfamily.</text>
</comment>
<reference key="1">
    <citation type="journal article" date="2009" name="Vaccine">
        <title>Whole genome sequence analysis of Mycobacterium bovis bacillus Calmette-Guerin (BCG) Tokyo 172: a comparative study of BCG vaccine substrains.</title>
        <authorList>
            <person name="Seki M."/>
            <person name="Honda I."/>
            <person name="Fujita I."/>
            <person name="Yano I."/>
            <person name="Yamamoto S."/>
            <person name="Koyama A."/>
        </authorList>
    </citation>
    <scope>NUCLEOTIDE SEQUENCE [LARGE SCALE GENOMIC DNA]</scope>
    <source>
        <strain>BCG / Tokyo 172 / ATCC 35737 / TMC 1019</strain>
    </source>
</reference>